<evidence type="ECO:0000250" key="1">
    <source>
        <dbReference type="UniProtKB" id="P13591"/>
    </source>
</evidence>
<evidence type="ECO:0000250" key="2">
    <source>
        <dbReference type="UniProtKB" id="P13595"/>
    </source>
</evidence>
<evidence type="ECO:0000255" key="3"/>
<evidence type="ECO:0000255" key="4">
    <source>
        <dbReference type="PROSITE-ProRule" id="PRU00114"/>
    </source>
</evidence>
<evidence type="ECO:0000255" key="5">
    <source>
        <dbReference type="PROSITE-ProRule" id="PRU00316"/>
    </source>
</evidence>
<evidence type="ECO:0000256" key="6">
    <source>
        <dbReference type="SAM" id="MobiDB-lite"/>
    </source>
</evidence>
<evidence type="ECO:0000269" key="7">
    <source>
    </source>
</evidence>
<evidence type="ECO:0000305" key="8">
    <source>
    </source>
</evidence>
<proteinExistence type="evidence at protein level"/>
<feature type="signal peptide" evidence="7">
    <location>
        <begin position="1"/>
        <end position="19"/>
    </location>
</feature>
<feature type="chain" id="PRO_0000015008" description="Neural cell adhesion molecule 1">
    <location>
        <begin position="20"/>
        <end position="853"/>
    </location>
</feature>
<feature type="topological domain" description="Extracellular" evidence="3">
    <location>
        <begin position="20"/>
        <end position="719"/>
    </location>
</feature>
<feature type="transmembrane region" description="Helical" evidence="3">
    <location>
        <begin position="720"/>
        <end position="737"/>
    </location>
</feature>
<feature type="topological domain" description="Cytoplasmic" evidence="3">
    <location>
        <begin position="738"/>
        <end position="853"/>
    </location>
</feature>
<feature type="domain" description="Ig-like C2-type 1">
    <location>
        <begin position="20"/>
        <end position="111"/>
    </location>
</feature>
<feature type="domain" description="Ig-like C2-type 2">
    <location>
        <begin position="116"/>
        <end position="205"/>
    </location>
</feature>
<feature type="domain" description="Ig-like C2-type 3">
    <location>
        <begin position="212"/>
        <end position="300"/>
    </location>
</feature>
<feature type="domain" description="Ig-like C2-type 4">
    <location>
        <begin position="307"/>
        <end position="412"/>
    </location>
</feature>
<feature type="domain" description="Ig-like C2-type 5">
    <location>
        <begin position="415"/>
        <end position="500"/>
    </location>
</feature>
<feature type="domain" description="Fibronectin type-III 1" evidence="5">
    <location>
        <begin position="508"/>
        <end position="607"/>
    </location>
</feature>
<feature type="domain" description="Fibronectin type-III 2" evidence="5">
    <location>
        <begin position="609"/>
        <end position="704"/>
    </location>
</feature>
<feature type="region of interest" description="Disordered" evidence="6">
    <location>
        <begin position="764"/>
        <end position="853"/>
    </location>
</feature>
<feature type="compositionally biased region" description="Basic and acidic residues" evidence="6">
    <location>
        <begin position="766"/>
        <end position="807"/>
    </location>
</feature>
<feature type="compositionally biased region" description="Basic and acidic residues" evidence="6">
    <location>
        <begin position="815"/>
        <end position="829"/>
    </location>
</feature>
<feature type="compositionally biased region" description="Polar residues" evidence="6">
    <location>
        <begin position="838"/>
        <end position="853"/>
    </location>
</feature>
<feature type="binding site" evidence="3">
    <location>
        <begin position="152"/>
        <end position="156"/>
    </location>
    <ligand>
        <name>heparin</name>
        <dbReference type="ChEBI" id="CHEBI:28304"/>
    </ligand>
</feature>
<feature type="binding site" evidence="3">
    <location>
        <begin position="161"/>
        <end position="165"/>
    </location>
    <ligand>
        <name>heparin</name>
        <dbReference type="ChEBI" id="CHEBI:28304"/>
    </ligand>
</feature>
<feature type="modified residue" description="Phosphoserine" evidence="2">
    <location>
        <position position="778"/>
    </location>
</feature>
<feature type="modified residue" description="Phosphoserine" evidence="2">
    <location>
        <position position="782"/>
    </location>
</feature>
<feature type="glycosylation site" description="N-linked (GlcNAc...) asparagine" evidence="3">
    <location>
        <position position="222"/>
    </location>
</feature>
<feature type="glycosylation site" description="N-linked (GlcNAc...) asparagine" evidence="3">
    <location>
        <position position="314"/>
    </location>
</feature>
<feature type="glycosylation site" description="N-linked (GlcNAc...) asparagine" evidence="3">
    <location>
        <position position="346"/>
    </location>
</feature>
<feature type="glycosylation site" description="N-linked (GlcNAc...) asparagine" evidence="3">
    <location>
        <position position="432"/>
    </location>
</feature>
<feature type="glycosylation site" description="N-linked (GlcNAc...) asparagine" evidence="3">
    <location>
        <position position="458"/>
    </location>
</feature>
<feature type="glycosylation site" description="N-linked (GlcNAc...) asparagine" evidence="3">
    <location>
        <position position="487"/>
    </location>
</feature>
<feature type="disulfide bond" evidence="4">
    <location>
        <begin position="41"/>
        <end position="96"/>
    </location>
</feature>
<feature type="disulfide bond" evidence="4">
    <location>
        <begin position="139"/>
        <end position="189"/>
    </location>
</feature>
<feature type="disulfide bond" evidence="4">
    <location>
        <begin position="235"/>
        <end position="286"/>
    </location>
</feature>
<feature type="disulfide bond" evidence="4">
    <location>
        <begin position="328"/>
        <end position="394"/>
    </location>
</feature>
<feature type="disulfide bond" evidence="4">
    <location>
        <begin position="435"/>
        <end position="488"/>
    </location>
</feature>
<sequence>MLQTKNLIWTLFFLGTAVSLQVDIVPSQGEISVGESKFFLCQVAGDAKDKDISWFSPNGEKLTPNQQRISVVWNDDSSSTLTIYNANIDDAGIYKCVVTAEDGTESEATVNVKIFQKLMFKNAPTPQEFREGEDAVIVCDVVSSLPPTIIWKHKGRDVILKKDVRFIVLTNNYLQIRGIKKTDEGTYRCEGRILARGEINFKDIQVIVNVPPTVQARQSIVNATANLGQSVTLVCNAEGFPEPTVSWTKDGEQIENEEDEKYLFSDDSSELTIRKVDKNDEAEYVCIAENKAGEQDASIHLKVFAKPKITYVENQTAMELEEQVTLTCEASGDPIPSITWRTSTRNISSEEKASWTRPEKQETLDGHMVVRSHARVSSLTLKSIQYTDAGEYVCTASNTIGQDSQSMYLEVQYAPKLQGPVAVYTWEGNQVNITCEVFAYPSATISWFRDGQLLPSSNYSNIKIYNTPSASYLEVTPDSENDFGNYNCTAVNRIGQESLEFVLVQADTPSSPSIDQVEPYSSTAQVQFDEPEATGGVPILKYKAEWRAMGEEVWHSKWYDAKEASMEGIVTIVGLKPETTYAVRLAALNGKGLGEISAASEFKTQPVREPSAPKLEGQMGEDGNSIKVKLIKQDDGGSPIRHYLVKYRALSSEWKPEIRLPSGSDHVMLKSLDWNAEYEVYVVAENQQGKSKAAHFVFRTSAQPTAIPANGSPTSGLSTGAIVGILVVTFVLLLVAVDVTCYFLNKCGLLMCIAVNLCGKAGPGAKGKDMEEGKAAFSKDESKEPIVEVRTEEERTPNHDGGKHTEPNETTPLTEPEKGPVEAKPETETKPAPAEVQTVPNDATQIKVNESKA</sequence>
<dbReference type="EMBL" id="X16451">
    <property type="protein sequence ID" value="CAA34470.1"/>
    <property type="molecule type" value="mRNA"/>
</dbReference>
<dbReference type="PIR" id="A32976">
    <property type="entry name" value="IJBONC"/>
</dbReference>
<dbReference type="RefSeq" id="NP_776824.1">
    <property type="nucleotide sequence ID" value="NM_174399.1"/>
</dbReference>
<dbReference type="BMRB" id="P31836"/>
<dbReference type="SMR" id="P31836"/>
<dbReference type="FunCoup" id="P31836">
    <property type="interactions" value="662"/>
</dbReference>
<dbReference type="STRING" id="9913.ENSBTAP00000062944"/>
<dbReference type="GlyCosmos" id="P31836">
    <property type="glycosylation" value="6 sites, No reported glycans"/>
</dbReference>
<dbReference type="GlyGen" id="P31836">
    <property type="glycosylation" value="6 sites"/>
</dbReference>
<dbReference type="SwissPalm" id="P31836"/>
<dbReference type="PaxDb" id="9913-ENSBTAP00000049952"/>
<dbReference type="PeptideAtlas" id="P31836"/>
<dbReference type="DNASU" id="281941"/>
<dbReference type="GeneID" id="281941"/>
<dbReference type="KEGG" id="bta:281941"/>
<dbReference type="CTD" id="4684"/>
<dbReference type="eggNOG" id="KOG3510">
    <property type="taxonomic scope" value="Eukaryota"/>
</dbReference>
<dbReference type="InParanoid" id="P31836"/>
<dbReference type="OrthoDB" id="10056271at2759"/>
<dbReference type="Proteomes" id="UP000009136">
    <property type="component" value="Unplaced"/>
</dbReference>
<dbReference type="GO" id="GO:0030424">
    <property type="term" value="C:axon"/>
    <property type="evidence" value="ECO:0000318"/>
    <property type="project" value="GO_Central"/>
</dbReference>
<dbReference type="GO" id="GO:0005886">
    <property type="term" value="C:plasma membrane"/>
    <property type="evidence" value="ECO:0000318"/>
    <property type="project" value="GO_Central"/>
</dbReference>
<dbReference type="GO" id="GO:0098632">
    <property type="term" value="F:cell-cell adhesion mediator activity"/>
    <property type="evidence" value="ECO:0000318"/>
    <property type="project" value="GO_Central"/>
</dbReference>
<dbReference type="GO" id="GO:0007411">
    <property type="term" value="P:axon guidance"/>
    <property type="evidence" value="ECO:0000318"/>
    <property type="project" value="GO_Central"/>
</dbReference>
<dbReference type="GO" id="GO:0070593">
    <property type="term" value="P:dendrite self-avoidance"/>
    <property type="evidence" value="ECO:0000318"/>
    <property type="project" value="GO_Central"/>
</dbReference>
<dbReference type="GO" id="GO:0001837">
    <property type="term" value="P:epithelial to mesenchymal transition"/>
    <property type="evidence" value="ECO:0000250"/>
    <property type="project" value="UniProtKB"/>
</dbReference>
<dbReference type="GO" id="GO:0007156">
    <property type="term" value="P:homophilic cell adhesion via plasma membrane adhesion molecules"/>
    <property type="evidence" value="ECO:0000318"/>
    <property type="project" value="GO_Central"/>
</dbReference>
<dbReference type="CDD" id="cd00063">
    <property type="entry name" value="FN3"/>
    <property type="match status" value="2"/>
</dbReference>
<dbReference type="CDD" id="cd00096">
    <property type="entry name" value="Ig"/>
    <property type="match status" value="1"/>
</dbReference>
<dbReference type="CDD" id="cd05865">
    <property type="entry name" value="IgI_1_NCAM-1"/>
    <property type="match status" value="1"/>
</dbReference>
<dbReference type="CDD" id="cd05869">
    <property type="entry name" value="IgI_NCAM-1"/>
    <property type="match status" value="1"/>
</dbReference>
<dbReference type="FunFam" id="2.60.40.10:FF:000086">
    <property type="entry name" value="Neural cell adhesion molecule 1"/>
    <property type="match status" value="1"/>
</dbReference>
<dbReference type="FunFam" id="2.60.40.10:FF:000173">
    <property type="entry name" value="Neural cell adhesion molecule 1"/>
    <property type="match status" value="1"/>
</dbReference>
<dbReference type="FunFam" id="2.60.40.10:FF:000151">
    <property type="entry name" value="neural cell adhesion molecule 1 isoform X1"/>
    <property type="match status" value="1"/>
</dbReference>
<dbReference type="FunFam" id="2.60.40.10:FF:000137">
    <property type="entry name" value="neural cell adhesion molecule 1 isoform X2"/>
    <property type="match status" value="1"/>
</dbReference>
<dbReference type="FunFam" id="2.60.40.10:FF:000149">
    <property type="entry name" value="neural cell adhesion molecule 1 isoform X2"/>
    <property type="match status" value="1"/>
</dbReference>
<dbReference type="FunFam" id="2.60.40.10:FF:000159">
    <property type="entry name" value="neural cell adhesion molecule 1 isoform X2"/>
    <property type="match status" value="1"/>
</dbReference>
<dbReference type="FunFam" id="2.60.40.10:FF:000221">
    <property type="entry name" value="neural cell adhesion molecule 1 isoform X2"/>
    <property type="match status" value="1"/>
</dbReference>
<dbReference type="Gene3D" id="2.60.40.10">
    <property type="entry name" value="Immunoglobulins"/>
    <property type="match status" value="7"/>
</dbReference>
<dbReference type="InterPro" id="IPR003961">
    <property type="entry name" value="FN3_dom"/>
</dbReference>
<dbReference type="InterPro" id="IPR036116">
    <property type="entry name" value="FN3_sf"/>
</dbReference>
<dbReference type="InterPro" id="IPR007110">
    <property type="entry name" value="Ig-like_dom"/>
</dbReference>
<dbReference type="InterPro" id="IPR036179">
    <property type="entry name" value="Ig-like_dom_sf"/>
</dbReference>
<dbReference type="InterPro" id="IPR013783">
    <property type="entry name" value="Ig-like_fold"/>
</dbReference>
<dbReference type="InterPro" id="IPR013098">
    <property type="entry name" value="Ig_I-set"/>
</dbReference>
<dbReference type="InterPro" id="IPR003599">
    <property type="entry name" value="Ig_sub"/>
</dbReference>
<dbReference type="InterPro" id="IPR003598">
    <property type="entry name" value="Ig_sub2"/>
</dbReference>
<dbReference type="InterPro" id="IPR051170">
    <property type="entry name" value="Neural/epithelial_adhesion"/>
</dbReference>
<dbReference type="InterPro" id="IPR009138">
    <property type="entry name" value="Neural_cell_adh"/>
</dbReference>
<dbReference type="PANTHER" id="PTHR12231">
    <property type="entry name" value="CTX-RELATED TYPE I TRANSMEMBRANE PROTEIN"/>
    <property type="match status" value="1"/>
</dbReference>
<dbReference type="PANTHER" id="PTHR12231:SF239">
    <property type="entry name" value="NEURAL CELL ADHESION MOLECULE 1"/>
    <property type="match status" value="1"/>
</dbReference>
<dbReference type="Pfam" id="PF00041">
    <property type="entry name" value="fn3"/>
    <property type="match status" value="2"/>
</dbReference>
<dbReference type="Pfam" id="PF07679">
    <property type="entry name" value="I-set"/>
    <property type="match status" value="2"/>
</dbReference>
<dbReference type="Pfam" id="PF13927">
    <property type="entry name" value="Ig_3"/>
    <property type="match status" value="3"/>
</dbReference>
<dbReference type="PRINTS" id="PR01838">
    <property type="entry name" value="NCAMFAMILY"/>
</dbReference>
<dbReference type="SMART" id="SM00060">
    <property type="entry name" value="FN3"/>
    <property type="match status" value="2"/>
</dbReference>
<dbReference type="SMART" id="SM00409">
    <property type="entry name" value="IG"/>
    <property type="match status" value="5"/>
</dbReference>
<dbReference type="SMART" id="SM00408">
    <property type="entry name" value="IGc2"/>
    <property type="match status" value="5"/>
</dbReference>
<dbReference type="SUPFAM" id="SSF49265">
    <property type="entry name" value="Fibronectin type III"/>
    <property type="match status" value="1"/>
</dbReference>
<dbReference type="SUPFAM" id="SSF48726">
    <property type="entry name" value="Immunoglobulin"/>
    <property type="match status" value="5"/>
</dbReference>
<dbReference type="PROSITE" id="PS50853">
    <property type="entry name" value="FN3"/>
    <property type="match status" value="2"/>
</dbReference>
<dbReference type="PROSITE" id="PS50835">
    <property type="entry name" value="IG_LIKE"/>
    <property type="match status" value="5"/>
</dbReference>
<gene>
    <name evidence="1" type="primary">NCAM1</name>
    <name type="synonym">NCAM</name>
</gene>
<accession>P31836</accession>
<reference key="1">
    <citation type="journal article" date="1989" name="FEBS Lett.">
        <title>Calmodulin-independent bovine brain adenylate cyclase. Amino acid sequence and nucleotide sequence of the corresponding cDNA.</title>
        <authorList>
            <person name="Lipkin V.M."/>
            <person name="Khramtsov N.V."/>
            <person name="Andreeva S.G."/>
            <person name="Moshnyakov M.V."/>
            <person name="Petukhova G.V."/>
            <person name="Rakitina T.V."/>
            <person name="Feshchenko E.A."/>
            <person name="Ishchenko K.A."/>
            <person name="Mirzoeva S.F."/>
            <person name="Chernova M.N."/>
            <person name="Dranytsyna S.M."/>
        </authorList>
    </citation>
    <scope>NUCLEOTIDE SEQUENCE [MRNA]</scope>
    <scope>PARTIAL PROTEIN SEQUENCE</scope>
    <source>
        <tissue>Brain cortex</tissue>
    </source>
</reference>
<reference key="2">
    <citation type="journal article" date="1986" name="J. Biol. Chem.">
        <title>Structural and immunological characterization of the amino-terminal domain of mammalian neural cell adhesion molecules.</title>
        <authorList>
            <person name="Rougon G."/>
            <person name="Marshak D.R."/>
        </authorList>
    </citation>
    <scope>PROTEIN SEQUENCE OF 20-36</scope>
</reference>
<reference key="3">
    <citation type="journal article" date="1991" name="FEBS Lett.">
        <title>A bovine brain cDNA purported to encode calmodulin-insensitive adenylyl cyclase has extensive identity with neural cell adhesion molecules (N-CAMs).</title>
        <authorList>
            <person name="Premont R.T."/>
        </authorList>
    </citation>
    <scope>IDENTIFICATION AS N-CAM</scope>
</reference>
<organism>
    <name type="scientific">Bos taurus</name>
    <name type="common">Bovine</name>
    <dbReference type="NCBI Taxonomy" id="9913"/>
    <lineage>
        <taxon>Eukaryota</taxon>
        <taxon>Metazoa</taxon>
        <taxon>Chordata</taxon>
        <taxon>Craniata</taxon>
        <taxon>Vertebrata</taxon>
        <taxon>Euteleostomi</taxon>
        <taxon>Mammalia</taxon>
        <taxon>Eutheria</taxon>
        <taxon>Laurasiatheria</taxon>
        <taxon>Artiodactyla</taxon>
        <taxon>Ruminantia</taxon>
        <taxon>Pecora</taxon>
        <taxon>Bovidae</taxon>
        <taxon>Bovinae</taxon>
        <taxon>Bos</taxon>
    </lineage>
</organism>
<name>NCAM1_BOVIN</name>
<comment type="function">
    <text>This protein is a cell adhesion molecule involved in neuron-neuron adhesion, neurite fasciculation, outgrowth of neurites, etc.</text>
</comment>
<comment type="subunit">
    <text evidence="2">Interacts with MDK. Found in a complex with SLC39A6, SLC39A10 and with NCAM1; this complex controls NCAM1 phosphorylation and integration into focal adhesion complexes during epithelial-tomesenchymal transition. Interacts with synaptic plasticity regulator PANTS.</text>
</comment>
<comment type="subcellular location">
    <subcellularLocation>
        <location>Cell membrane</location>
        <topology>Single-pass type I membrane protein</topology>
    </subcellularLocation>
</comment>
<comment type="alternative products">
    <event type="alternative splicing"/>
    <isoform>
        <id>P31836-1</id>
        <name>1</name>
        <name>N-CAM 140</name>
        <sequence type="displayed"/>
    </isoform>
    <text>A number of isoforms are produced.</text>
</comment>
<comment type="PTM">
    <text evidence="1">Polysialylated by ST8SIA2 and ST8SIA4. Polysialylation modulates cell interactions by confering both attractive and repulsive properties that are highly regulated by ST8SIA2 and ST8SIA4. Polysialylation is formed on a-2,3-linked sialic acid of core glycans.</text>
</comment>
<comment type="caution">
    <text evidence="8">Was originally thought to be a calmodulin-independent adenylate cyclase.</text>
</comment>
<keyword id="KW-0025">Alternative splicing</keyword>
<keyword id="KW-0130">Cell adhesion</keyword>
<keyword id="KW-1003">Cell membrane</keyword>
<keyword id="KW-0903">Direct protein sequencing</keyword>
<keyword id="KW-1015">Disulfide bond</keyword>
<keyword id="KW-0325">Glycoprotein</keyword>
<keyword id="KW-0393">Immunoglobulin domain</keyword>
<keyword id="KW-0472">Membrane</keyword>
<keyword id="KW-0597">Phosphoprotein</keyword>
<keyword id="KW-1185">Reference proteome</keyword>
<keyword id="KW-0677">Repeat</keyword>
<keyword id="KW-0732">Signal</keyword>
<keyword id="KW-0812">Transmembrane</keyword>
<keyword id="KW-1133">Transmembrane helix</keyword>
<protein>
    <recommendedName>
        <fullName evidence="1">Neural cell adhesion molecule 1</fullName>
        <shortName>N-CAM-1</shortName>
        <shortName>NCAM-1</shortName>
    </recommendedName>
</protein>